<reference key="1">
    <citation type="journal article" date="1980" name="Biochem. Biophys. Res. Commun.">
        <title>Occurrence of two different endorphins in the salmon pituitary.</title>
        <authorList>
            <person name="Kawauchi H."/>
            <person name="Tsubokawa M."/>
            <person name="Kanezawa A."/>
            <person name="Kitagawa H."/>
        </authorList>
    </citation>
    <scope>PROTEIN SEQUENCE</scope>
    <scope>ACETYLATION AT TYR-1</scope>
</reference>
<sequence>YGGFMKSWNERSQKPLLTLFKNVIIKDGQQ</sequence>
<name>END2_ONCKE</name>
<dbReference type="PIR" id="A01469">
    <property type="entry name" value="OEON2K"/>
</dbReference>
<dbReference type="SMR" id="P01205"/>
<dbReference type="iPTMnet" id="P01205"/>
<dbReference type="GO" id="GO:0005576">
    <property type="term" value="C:extracellular region"/>
    <property type="evidence" value="ECO:0007669"/>
    <property type="project" value="UniProtKB-SubCell"/>
</dbReference>
<dbReference type="GO" id="GO:0007218">
    <property type="term" value="P:neuropeptide signaling pathway"/>
    <property type="evidence" value="ECO:0007669"/>
    <property type="project" value="UniProtKB-KW"/>
</dbReference>
<dbReference type="InterPro" id="IPR013532">
    <property type="entry name" value="Opioid_neuropept"/>
</dbReference>
<dbReference type="Pfam" id="PF08035">
    <property type="entry name" value="Op_neuropeptide"/>
    <property type="match status" value="1"/>
</dbReference>
<dbReference type="SMART" id="SM01365">
    <property type="entry name" value="Op_neuropeptide"/>
    <property type="match status" value="1"/>
</dbReference>
<accession>P01205</accession>
<comment type="subcellular location">
    <subcellularLocation>
        <location>Secreted</location>
    </subcellularLocation>
</comment>
<comment type="similarity">
    <text evidence="2">Belongs to the POMC family.</text>
</comment>
<keyword id="KW-0007">Acetylation</keyword>
<keyword id="KW-0903">Direct protein sequencing</keyword>
<keyword id="KW-0257">Endorphin</keyword>
<keyword id="KW-0964">Secreted</keyword>
<evidence type="ECO:0000269" key="1">
    <source>
    </source>
</evidence>
<evidence type="ECO:0000305" key="2"/>
<feature type="peptide" id="PRO_0000044575" description="Beta-endorphin-2">
    <location>
        <begin position="1"/>
        <end position="30"/>
    </location>
</feature>
<feature type="peptide" id="PRO_0000025092" description="Met-enkephalin">
    <location>
        <begin position="1"/>
        <end position="5"/>
    </location>
</feature>
<feature type="modified residue" description="N-acetyltyrosine" evidence="1">
    <location>
        <position position="1"/>
    </location>
</feature>
<proteinExistence type="evidence at protein level"/>
<organism>
    <name type="scientific">Oncorhynchus keta</name>
    <name type="common">Chum salmon</name>
    <name type="synonym">Salmo keta</name>
    <dbReference type="NCBI Taxonomy" id="8018"/>
    <lineage>
        <taxon>Eukaryota</taxon>
        <taxon>Metazoa</taxon>
        <taxon>Chordata</taxon>
        <taxon>Craniata</taxon>
        <taxon>Vertebrata</taxon>
        <taxon>Euteleostomi</taxon>
        <taxon>Actinopterygii</taxon>
        <taxon>Neopterygii</taxon>
        <taxon>Teleostei</taxon>
        <taxon>Protacanthopterygii</taxon>
        <taxon>Salmoniformes</taxon>
        <taxon>Salmonidae</taxon>
        <taxon>Salmoninae</taxon>
        <taxon>Oncorhynchus</taxon>
    </lineage>
</organism>
<protein>
    <recommendedName>
        <fullName>Beta-endorphin-2</fullName>
    </recommendedName>
    <alternativeName>
        <fullName>Beta-endorphin II</fullName>
    </alternativeName>
    <component>
        <recommendedName>
            <fullName>Met-enkephalin</fullName>
        </recommendedName>
    </component>
</protein>